<organism>
    <name type="scientific">Escherichia coli O6:H1 (strain CFT073 / ATCC 700928 / UPEC)</name>
    <dbReference type="NCBI Taxonomy" id="199310"/>
    <lineage>
        <taxon>Bacteria</taxon>
        <taxon>Pseudomonadati</taxon>
        <taxon>Pseudomonadota</taxon>
        <taxon>Gammaproteobacteria</taxon>
        <taxon>Enterobacterales</taxon>
        <taxon>Enterobacteriaceae</taxon>
        <taxon>Escherichia</taxon>
    </lineage>
</organism>
<gene>
    <name type="primary">ulaB</name>
    <name type="ordered locus">c5283</name>
</gene>
<proteinExistence type="inferred from homology"/>
<evidence type="ECO:0000250" key="1">
    <source>
        <dbReference type="UniProtKB" id="P00550"/>
    </source>
</evidence>
<evidence type="ECO:0000250" key="2">
    <source>
        <dbReference type="UniProtKB" id="P69822"/>
    </source>
</evidence>
<evidence type="ECO:0000255" key="3">
    <source>
        <dbReference type="PROSITE-ProRule" id="PRU00422"/>
    </source>
</evidence>
<evidence type="ECO:0000305" key="4"/>
<protein>
    <recommendedName>
        <fullName evidence="2">Ascorbate-specific PTS system EIIB component</fullName>
        <ecNumber evidence="2">2.7.1.194</ecNumber>
    </recommendedName>
    <alternativeName>
        <fullName evidence="2">Ascorbate-specific phosphotransferase enzyme IIB component</fullName>
    </alternativeName>
</protein>
<sequence>MTVRILAVCGNGQGSSMIMKMKVDQFLTQSNIDHTVNSCAVGEYKSELSGADIIIASTHIAGEITVTGNKYVVGVRNMLSPADFGPKLLEVIKAHFPQDVK</sequence>
<reference key="1">
    <citation type="journal article" date="2002" name="Proc. Natl. Acad. Sci. U.S.A.">
        <title>Extensive mosaic structure revealed by the complete genome sequence of uropathogenic Escherichia coli.</title>
        <authorList>
            <person name="Welch R.A."/>
            <person name="Burland V."/>
            <person name="Plunkett G. III"/>
            <person name="Redford P."/>
            <person name="Roesch P."/>
            <person name="Rasko D."/>
            <person name="Buckles E.L."/>
            <person name="Liou S.-R."/>
            <person name="Boutin A."/>
            <person name="Hackett J."/>
            <person name="Stroud D."/>
            <person name="Mayhew G.F."/>
            <person name="Rose D.J."/>
            <person name="Zhou S."/>
            <person name="Schwartz D.C."/>
            <person name="Perna N.T."/>
            <person name="Mobley H.L.T."/>
            <person name="Donnenberg M.S."/>
            <person name="Blattner F.R."/>
        </authorList>
    </citation>
    <scope>NUCLEOTIDE SEQUENCE [LARGE SCALE GENOMIC DNA]</scope>
    <source>
        <strain>CFT073 / ATCC 700928 / UPEC</strain>
    </source>
</reference>
<feature type="chain" id="PRO_0000230322" description="Ascorbate-specific PTS system EIIB component">
    <location>
        <begin position="1"/>
        <end position="101"/>
    </location>
</feature>
<feature type="domain" description="PTS EIIB type-2" evidence="3">
    <location>
        <begin position="3"/>
        <end position="96"/>
    </location>
</feature>
<feature type="active site" description="Phosphocysteine intermediate" evidence="1 4">
    <location>
        <position position="9"/>
    </location>
</feature>
<feature type="modified residue" description="Phosphocysteine" evidence="1 4">
    <location>
        <position position="9"/>
    </location>
</feature>
<accession>Q8FAJ1</accession>
<name>ULAB_ECOL6</name>
<comment type="function">
    <text evidence="2">The phosphoenolpyruvate-dependent sugar phosphotransferase system (sugar PTS), a major carbohydrate active transport system, catalyzes the phosphorylation of incoming sugar substrates concomitantly with their translocation across the cell membrane. The enzyme II UlaABC PTS system is involved in ascorbate transport.</text>
</comment>
<comment type="catalytic activity">
    <reaction evidence="2">
        <text>N(pros)-phospho-L-histidyl-[protein] + L-ascorbate(out) = L-ascorbate 6-phosphate(in) + L-histidyl-[protein]</text>
        <dbReference type="Rhea" id="RHEA:42436"/>
        <dbReference type="Rhea" id="RHEA-COMP:9745"/>
        <dbReference type="Rhea" id="RHEA-COMP:9746"/>
        <dbReference type="ChEBI" id="CHEBI:29979"/>
        <dbReference type="ChEBI" id="CHEBI:38290"/>
        <dbReference type="ChEBI" id="CHEBI:61698"/>
        <dbReference type="ChEBI" id="CHEBI:64837"/>
        <dbReference type="EC" id="2.7.1.194"/>
    </reaction>
</comment>
<comment type="subcellular location">
    <subcellularLocation>
        <location evidence="4">Cytoplasm</location>
    </subcellularLocation>
</comment>
<comment type="induction">
    <text evidence="2">Induced by L-ascorbate. Repressed by UlaR.</text>
</comment>
<comment type="domain">
    <text evidence="3">The PTS EIIB type-2 domain is phosphorylated by phospho-EIIA on a cysteinyl residue. Then, it transfers the phosphoryl group to the sugar substrate concomitantly with the sugar uptake processed by the PTS EIIC type-2 domain.</text>
</comment>
<comment type="sequence caution" evidence="4">
    <conflict type="erroneous initiation">
        <sequence resource="EMBL-CDS" id="AAN83704"/>
    </conflict>
</comment>
<keyword id="KW-0963">Cytoplasm</keyword>
<keyword id="KW-0418">Kinase</keyword>
<keyword id="KW-0597">Phosphoprotein</keyword>
<keyword id="KW-0598">Phosphotransferase system</keyword>
<keyword id="KW-1185">Reference proteome</keyword>
<keyword id="KW-0808">Transferase</keyword>
<keyword id="KW-0813">Transport</keyword>
<dbReference type="EC" id="2.7.1.194" evidence="2"/>
<dbReference type="EMBL" id="AE014075">
    <property type="protein sequence ID" value="AAN83704.1"/>
    <property type="status" value="ALT_INIT"/>
    <property type="molecule type" value="Genomic_DNA"/>
</dbReference>
<dbReference type="RefSeq" id="WP_000218360.1">
    <property type="nucleotide sequence ID" value="NZ_CP051263.1"/>
</dbReference>
<dbReference type="SMR" id="Q8FAJ1"/>
<dbReference type="STRING" id="199310.c5283"/>
<dbReference type="KEGG" id="ecc:c5283"/>
<dbReference type="eggNOG" id="COG3414">
    <property type="taxonomic scope" value="Bacteria"/>
</dbReference>
<dbReference type="HOGENOM" id="CLU_159248_0_0_6"/>
<dbReference type="Proteomes" id="UP000001410">
    <property type="component" value="Chromosome"/>
</dbReference>
<dbReference type="GO" id="GO:0005737">
    <property type="term" value="C:cytoplasm"/>
    <property type="evidence" value="ECO:0007669"/>
    <property type="project" value="UniProtKB-SubCell"/>
</dbReference>
<dbReference type="GO" id="GO:0016301">
    <property type="term" value="F:kinase activity"/>
    <property type="evidence" value="ECO:0007669"/>
    <property type="project" value="UniProtKB-KW"/>
</dbReference>
<dbReference type="GO" id="GO:0008982">
    <property type="term" value="F:protein-N(PI)-phosphohistidine-sugar phosphotransferase activity"/>
    <property type="evidence" value="ECO:0007669"/>
    <property type="project" value="InterPro"/>
</dbReference>
<dbReference type="GO" id="GO:0009401">
    <property type="term" value="P:phosphoenolpyruvate-dependent sugar phosphotransferase system"/>
    <property type="evidence" value="ECO:0007669"/>
    <property type="project" value="UniProtKB-KW"/>
</dbReference>
<dbReference type="CDD" id="cd05563">
    <property type="entry name" value="PTS_IIB_ascorbate"/>
    <property type="match status" value="1"/>
</dbReference>
<dbReference type="FunFam" id="3.40.50.2300:FF:000030">
    <property type="entry name" value="PTS system, ascorbate-specific, IIB component"/>
    <property type="match status" value="1"/>
</dbReference>
<dbReference type="Gene3D" id="3.40.50.2300">
    <property type="match status" value="1"/>
</dbReference>
<dbReference type="InterPro" id="IPR036095">
    <property type="entry name" value="PTS_EIIB-like_sf"/>
</dbReference>
<dbReference type="InterPro" id="IPR013011">
    <property type="entry name" value="PTS_EIIB_2"/>
</dbReference>
<dbReference type="InterPro" id="IPR003501">
    <property type="entry name" value="PTS_EIIB_2/3"/>
</dbReference>
<dbReference type="NCBIfam" id="NF007586">
    <property type="entry name" value="PRK10222.1"/>
    <property type="match status" value="1"/>
</dbReference>
<dbReference type="Pfam" id="PF02302">
    <property type="entry name" value="PTS_IIB"/>
    <property type="match status" value="1"/>
</dbReference>
<dbReference type="SUPFAM" id="SSF52794">
    <property type="entry name" value="PTS system IIB component-like"/>
    <property type="match status" value="1"/>
</dbReference>
<dbReference type="PROSITE" id="PS51099">
    <property type="entry name" value="PTS_EIIB_TYPE_2"/>
    <property type="match status" value="1"/>
</dbReference>